<name>PFR1_TRYBB</name>
<dbReference type="EMBL" id="X14819">
    <property type="protein sequence ID" value="CAA32930.1"/>
    <property type="molecule type" value="Genomic_DNA"/>
</dbReference>
<dbReference type="EMBL" id="X14819">
    <property type="protein sequence ID" value="CAA32931.1"/>
    <property type="molecule type" value="Genomic_DNA"/>
</dbReference>
<dbReference type="EMBL" id="K02195">
    <property type="protein sequence ID" value="AAA30212.1"/>
    <property type="molecule type" value="mRNA"/>
</dbReference>
<dbReference type="PIR" id="A21440">
    <property type="entry name" value="A21440"/>
</dbReference>
<dbReference type="PIR" id="A33658">
    <property type="entry name" value="A33658"/>
</dbReference>
<dbReference type="SMR" id="P22225"/>
<dbReference type="OMA" id="ECMNVTV"/>
<dbReference type="GO" id="GO:0005737">
    <property type="term" value="C:cytoplasm"/>
    <property type="evidence" value="ECO:0007669"/>
    <property type="project" value="UniProtKB-KW"/>
</dbReference>
<dbReference type="GO" id="GO:0005856">
    <property type="term" value="C:cytoskeleton"/>
    <property type="evidence" value="ECO:0007669"/>
    <property type="project" value="UniProtKB-SubCell"/>
</dbReference>
<dbReference type="GO" id="GO:0031514">
    <property type="term" value="C:motile cilium"/>
    <property type="evidence" value="ECO:0007669"/>
    <property type="project" value="UniProtKB-SubCell"/>
</dbReference>
<dbReference type="GO" id="GO:0005516">
    <property type="term" value="F:calmodulin binding"/>
    <property type="evidence" value="ECO:0007669"/>
    <property type="project" value="UniProtKB-KW"/>
</dbReference>
<dbReference type="InterPro" id="IPR007824">
    <property type="entry name" value="Flagellar_rod"/>
</dbReference>
<dbReference type="InterPro" id="IPR053120">
    <property type="entry name" value="PFR_Component"/>
</dbReference>
<dbReference type="PANTHER" id="PTHR34732:SF1">
    <property type="entry name" value="69 KDA PARAFLAGELLAR ROD PROTEIN"/>
    <property type="match status" value="1"/>
</dbReference>
<dbReference type="PANTHER" id="PTHR34732">
    <property type="entry name" value="69 KDA PARAFLAGELLAR ROD PROTEIN-RELATED"/>
    <property type="match status" value="1"/>
</dbReference>
<dbReference type="Pfam" id="PF05149">
    <property type="entry name" value="Flagellar_rod"/>
    <property type="match status" value="1"/>
</dbReference>
<accession>P22225</accession>
<evidence type="ECO:0000255" key="1"/>
<evidence type="ECO:0000305" key="2"/>
<sequence length="600" mass="69597">MSGKEVEGVVSPADQQQPAVPEVTDITLEAARKQKIHNLKLKTACLSNEEYVQDLHVSEWSETQKQKLQAAHEKAHELLASVEGGTKWSLTEAYDIKKLMRVCGLEMSVRELYKPEDKPQFMEIVALKKTMNELKQHHNKTRTVSFTGMIDNAIAKLEKIEDELRRSQLDASEMAQVPVAALKNIEDTMNVAVVQTALLGNEEQIKAQLAAVEKANEIRNVAIADGEMAIAEEQYYIKAQLLEHLVELVADKFRIIGQTEDENKSFSKIHEVQKKSFQESASIKDAKRRLKQHCEDDLRNLHDAIQKADLEDAEAMKRFATQKEKSERFIHENLDKQDEAWRRIQELERVLQRLGTERFEEVKRRIEENDREEKRKVEYQQFLDVCGQHKKLLELSVYNCDLALRCMGMLEEIVAEGCSAVKSRHDKTNDELSDLRLQVHQEYLEAFRRLYKTLGQLVYKKEKRLEEIDRNIRTTHIQLEFAIETFDPNAKLHSDKKKDLYKLRAQVEEELEMLKDKMAQALEMFGPTEDALNQAGIDFVHPAEEVESGNMDRRSKMVEYRAHLAKQEEVKIAAEREELKRSKMLQSQQYRGRTMPQITQ</sequence>
<protein>
    <recommendedName>
        <fullName>69 kDa paraflagellar rod protein</fullName>
        <shortName>69 kDa PFR protein</shortName>
    </recommendedName>
    <alternativeName>
        <fullName>PFR-A/PFR-B</fullName>
    </alternativeName>
</protein>
<keyword id="KW-0112">Calmodulin-binding</keyword>
<keyword id="KW-0966">Cell projection</keyword>
<keyword id="KW-0969">Cilium</keyword>
<keyword id="KW-0963">Cytoplasm</keyword>
<keyword id="KW-0206">Cytoskeleton</keyword>
<keyword id="KW-0282">Flagellum</keyword>
<comment type="function">
    <text>Major component of the paraflagellar rod (PFR). The PFR is a highly ordered lattices of fibrous proteins that are located inside the flagellum and assume a fixed orientation with respect to the microtubular axoneme.</text>
</comment>
<comment type="subunit">
    <text>Heterodimer of a 69 kDa and a 73 kDa protein.</text>
</comment>
<comment type="subcellular location">
    <subcellularLocation>
        <location>Cell projection</location>
        <location>Cilium</location>
        <location>Flagellum</location>
    </subcellularLocation>
    <subcellularLocation>
        <location>Cytoplasm</location>
        <location>Cytoskeleton</location>
    </subcellularLocation>
</comment>
<comment type="miscellaneous">
    <text>Coded by two tandemly repeated genes with identical ORF: PFRA and PFRB.</text>
</comment>
<gene>
    <name type="primary">PFRA</name>
</gene>
<gene>
    <name type="primary">PFRB</name>
</gene>
<reference key="1">
    <citation type="journal article" date="1989" name="J. Cell Biol.">
        <title>The major component of the paraflagellar rod of Trypanosoma brucei is a helical protein that is encoded by two identical, tandemly linked genes.</title>
        <authorList>
            <person name="Schlaeppi K."/>
            <person name="Deflorin J."/>
            <person name="Seebeck T."/>
        </authorList>
    </citation>
    <scope>NUCLEOTIDE SEQUENCE [GENOMIC DNA]</scope>
    <source>
        <strain>STIB 366</strain>
    </source>
</reference>
<reference key="2">
    <citation type="journal article" date="1984" name="Cell">
        <title>Trypanosome mRNAs share a common 5' spliced leader sequence.</title>
        <authorList>
            <person name="Parsons M."/>
            <person name="Nelson R.G."/>
            <person name="Watkins K.P."/>
            <person name="Agabian N."/>
        </authorList>
    </citation>
    <scope>NUCLEOTIDE SEQUENCE [MRNA] OF 1-8</scope>
</reference>
<proteinExistence type="evidence at transcript level"/>
<feature type="chain" id="PRO_0000058346" description="69 kDa paraflagellar rod protein">
    <location>
        <begin position="1"/>
        <end position="600"/>
    </location>
</feature>
<feature type="region of interest" description="Calmodulin-binding" evidence="1">
    <location>
        <begin position="335"/>
        <end position="355"/>
    </location>
</feature>
<feature type="sequence conflict" description="In Ref. 2; AAA30212." evidence="2" ref="2">
    <original>E</original>
    <variation>G</variation>
    <location>
        <position position="7"/>
    </location>
</feature>
<organism>
    <name type="scientific">Trypanosoma brucei brucei</name>
    <dbReference type="NCBI Taxonomy" id="5702"/>
    <lineage>
        <taxon>Eukaryota</taxon>
        <taxon>Discoba</taxon>
        <taxon>Euglenozoa</taxon>
        <taxon>Kinetoplastea</taxon>
        <taxon>Metakinetoplastina</taxon>
        <taxon>Trypanosomatida</taxon>
        <taxon>Trypanosomatidae</taxon>
        <taxon>Trypanosoma</taxon>
    </lineage>
</organism>